<keyword id="KW-0067">ATP-binding</keyword>
<keyword id="KW-0997">Cell inner membrane</keyword>
<keyword id="KW-1003">Cell membrane</keyword>
<keyword id="KW-0418">Kinase</keyword>
<keyword id="KW-0472">Membrane</keyword>
<keyword id="KW-0547">Nucleotide-binding</keyword>
<keyword id="KW-0597">Phosphoprotein</keyword>
<keyword id="KW-1185">Reference proteome</keyword>
<keyword id="KW-0808">Transferase</keyword>
<keyword id="KW-0812">Transmembrane</keyword>
<keyword id="KW-1133">Transmembrane helix</keyword>
<keyword id="KW-0902">Two-component regulatory system</keyword>
<feature type="chain" id="PRO_0000074752" description="Sensor histidine kinase DcuS">
    <location>
        <begin position="1"/>
        <end position="543"/>
    </location>
</feature>
<feature type="topological domain" description="Cytoplasmic" evidence="1">
    <location>
        <begin position="1"/>
        <end position="20"/>
    </location>
</feature>
<feature type="transmembrane region" description="Helical" evidence="2">
    <location>
        <begin position="21"/>
        <end position="41"/>
    </location>
</feature>
<feature type="topological domain" description="Periplasmic" evidence="1">
    <location>
        <begin position="42"/>
        <end position="181"/>
    </location>
</feature>
<feature type="transmembrane region" description="Helical" evidence="2">
    <location>
        <begin position="182"/>
        <end position="202"/>
    </location>
</feature>
<feature type="topological domain" description="Cytoplasmic" evidence="1">
    <location>
        <begin position="203"/>
        <end position="543"/>
    </location>
</feature>
<feature type="domain" description="PAS" evidence="4">
    <location>
        <begin position="212"/>
        <end position="323"/>
    </location>
</feature>
<feature type="domain" description="Histidine kinase" evidence="3">
    <location>
        <begin position="346"/>
        <end position="538"/>
    </location>
</feature>
<feature type="binding site" evidence="1">
    <location>
        <begin position="107"/>
        <end position="110"/>
    </location>
    <ligand>
        <name>(R)-malate</name>
        <dbReference type="ChEBI" id="CHEBI:15588"/>
    </ligand>
</feature>
<feature type="binding site" evidence="1">
    <location>
        <position position="121"/>
    </location>
    <ligand>
        <name>(R)-malate</name>
        <dbReference type="ChEBI" id="CHEBI:15588"/>
    </ligand>
</feature>
<feature type="binding site" evidence="1">
    <location>
        <begin position="140"/>
        <end position="142"/>
    </location>
    <ligand>
        <name>(R)-malate</name>
        <dbReference type="ChEBI" id="CHEBI:15588"/>
    </ligand>
</feature>
<feature type="binding site" evidence="1">
    <location>
        <position position="147"/>
    </location>
    <ligand>
        <name>(R)-malate</name>
        <dbReference type="ChEBI" id="CHEBI:15588"/>
    </ligand>
</feature>
<feature type="modified residue" description="Phosphohistidine; by autocatalysis" evidence="3">
    <location>
        <position position="349"/>
    </location>
</feature>
<protein>
    <recommendedName>
        <fullName evidence="1">Sensor histidine kinase DcuS</fullName>
        <ecNumber evidence="1">2.7.13.3</ecNumber>
    </recommendedName>
</protein>
<name>DCUS_ECOL6</name>
<accession>P59340</accession>
<evidence type="ECO:0000250" key="1">
    <source>
        <dbReference type="UniProtKB" id="P0AEC8"/>
    </source>
</evidence>
<evidence type="ECO:0000255" key="2"/>
<evidence type="ECO:0000255" key="3">
    <source>
        <dbReference type="PROSITE-ProRule" id="PRU00107"/>
    </source>
</evidence>
<evidence type="ECO:0000255" key="4">
    <source>
        <dbReference type="PROSITE-ProRule" id="PRU00140"/>
    </source>
</evidence>
<dbReference type="EC" id="2.7.13.3" evidence="1"/>
<dbReference type="EMBL" id="AE014075">
    <property type="protein sequence ID" value="AAN83553.1"/>
    <property type="molecule type" value="Genomic_DNA"/>
</dbReference>
<dbReference type="RefSeq" id="WP_001216466.1">
    <property type="nucleotide sequence ID" value="NZ_CP051263.1"/>
</dbReference>
<dbReference type="BMRB" id="P59340"/>
<dbReference type="SMR" id="P59340"/>
<dbReference type="STRING" id="199310.c5131"/>
<dbReference type="KEGG" id="ecc:c5131"/>
<dbReference type="eggNOG" id="COG3290">
    <property type="taxonomic scope" value="Bacteria"/>
</dbReference>
<dbReference type="HOGENOM" id="CLU_020211_11_2_6"/>
<dbReference type="BioCyc" id="ECOL199310:C5131-MONOMER"/>
<dbReference type="BRENDA" id="2.7.13.3">
    <property type="organism ID" value="2026"/>
</dbReference>
<dbReference type="Proteomes" id="UP000001410">
    <property type="component" value="Chromosome"/>
</dbReference>
<dbReference type="GO" id="GO:0005886">
    <property type="term" value="C:plasma membrane"/>
    <property type="evidence" value="ECO:0007669"/>
    <property type="project" value="UniProtKB-SubCell"/>
</dbReference>
<dbReference type="GO" id="GO:0005524">
    <property type="term" value="F:ATP binding"/>
    <property type="evidence" value="ECO:0007669"/>
    <property type="project" value="UniProtKB-KW"/>
</dbReference>
<dbReference type="GO" id="GO:0000155">
    <property type="term" value="F:phosphorelay sensor kinase activity"/>
    <property type="evidence" value="ECO:0007669"/>
    <property type="project" value="InterPro"/>
</dbReference>
<dbReference type="GO" id="GO:0006355">
    <property type="term" value="P:regulation of DNA-templated transcription"/>
    <property type="evidence" value="ECO:0007669"/>
    <property type="project" value="InterPro"/>
</dbReference>
<dbReference type="CDD" id="cd16915">
    <property type="entry name" value="HATPase_DpiB-CitA-like"/>
    <property type="match status" value="1"/>
</dbReference>
<dbReference type="CDD" id="cd00130">
    <property type="entry name" value="PAS"/>
    <property type="match status" value="1"/>
</dbReference>
<dbReference type="FunFam" id="1.10.287.130:FF:000011">
    <property type="entry name" value="Sensor histidine kinase DcuS"/>
    <property type="match status" value="1"/>
</dbReference>
<dbReference type="FunFam" id="3.30.450.20:FF:000018">
    <property type="entry name" value="Sensor histidine kinase DcuS"/>
    <property type="match status" value="1"/>
</dbReference>
<dbReference type="FunFam" id="3.30.450.20:FF:000045">
    <property type="entry name" value="Sensor histidine kinase DcuS"/>
    <property type="match status" value="1"/>
</dbReference>
<dbReference type="FunFam" id="3.30.565.10:FF:000041">
    <property type="entry name" value="Sensor histidine kinase DcuS"/>
    <property type="match status" value="1"/>
</dbReference>
<dbReference type="Gene3D" id="1.10.287.130">
    <property type="match status" value="1"/>
</dbReference>
<dbReference type="Gene3D" id="3.30.565.10">
    <property type="entry name" value="Histidine kinase-like ATPase, C-terminal domain"/>
    <property type="match status" value="1"/>
</dbReference>
<dbReference type="Gene3D" id="3.30.450.20">
    <property type="entry name" value="PAS domain"/>
    <property type="match status" value="2"/>
</dbReference>
<dbReference type="InterPro" id="IPR036890">
    <property type="entry name" value="HATPase_C_sf"/>
</dbReference>
<dbReference type="InterPro" id="IPR005467">
    <property type="entry name" value="His_kinase_dom"/>
</dbReference>
<dbReference type="InterPro" id="IPR000014">
    <property type="entry name" value="PAS"/>
</dbReference>
<dbReference type="InterPro" id="IPR035965">
    <property type="entry name" value="PAS-like_dom_sf"/>
</dbReference>
<dbReference type="InterPro" id="IPR013767">
    <property type="entry name" value="PAS_fold"/>
</dbReference>
<dbReference type="InterPro" id="IPR033463">
    <property type="entry name" value="sCache_3"/>
</dbReference>
<dbReference type="InterPro" id="IPR029151">
    <property type="entry name" value="Sensor-like_sf"/>
</dbReference>
<dbReference type="InterPro" id="IPR004358">
    <property type="entry name" value="Sig_transdc_His_kin-like_C"/>
</dbReference>
<dbReference type="InterPro" id="IPR016120">
    <property type="entry name" value="Sig_transdc_His_kin_SpoOB"/>
</dbReference>
<dbReference type="InterPro" id="IPR039506">
    <property type="entry name" value="SPOB_a"/>
</dbReference>
<dbReference type="NCBIfam" id="NF008298">
    <property type="entry name" value="PRK11086.1"/>
    <property type="match status" value="1"/>
</dbReference>
<dbReference type="PANTHER" id="PTHR43547:SF10">
    <property type="entry name" value="SENSOR HISTIDINE KINASE DCUS"/>
    <property type="match status" value="1"/>
</dbReference>
<dbReference type="PANTHER" id="PTHR43547">
    <property type="entry name" value="TWO-COMPONENT HISTIDINE KINASE"/>
    <property type="match status" value="1"/>
</dbReference>
<dbReference type="Pfam" id="PF02518">
    <property type="entry name" value="HATPase_c"/>
    <property type="match status" value="1"/>
</dbReference>
<dbReference type="Pfam" id="PF00989">
    <property type="entry name" value="PAS"/>
    <property type="match status" value="1"/>
</dbReference>
<dbReference type="Pfam" id="PF17203">
    <property type="entry name" value="sCache_3_2"/>
    <property type="match status" value="1"/>
</dbReference>
<dbReference type="Pfam" id="PF14689">
    <property type="entry name" value="SPOB_a"/>
    <property type="match status" value="1"/>
</dbReference>
<dbReference type="PRINTS" id="PR00344">
    <property type="entry name" value="BCTRLSENSOR"/>
</dbReference>
<dbReference type="SMART" id="SM00387">
    <property type="entry name" value="HATPase_c"/>
    <property type="match status" value="1"/>
</dbReference>
<dbReference type="SMART" id="SM00091">
    <property type="entry name" value="PAS"/>
    <property type="match status" value="1"/>
</dbReference>
<dbReference type="SUPFAM" id="SSF55874">
    <property type="entry name" value="ATPase domain of HSP90 chaperone/DNA topoisomerase II/histidine kinase"/>
    <property type="match status" value="1"/>
</dbReference>
<dbReference type="SUPFAM" id="SSF55785">
    <property type="entry name" value="PYP-like sensor domain (PAS domain)"/>
    <property type="match status" value="1"/>
</dbReference>
<dbReference type="SUPFAM" id="SSF103190">
    <property type="entry name" value="Sensory domain-like"/>
    <property type="match status" value="1"/>
</dbReference>
<dbReference type="SUPFAM" id="SSF55890">
    <property type="entry name" value="Sporulation response regulatory protein Spo0B"/>
    <property type="match status" value="1"/>
</dbReference>
<dbReference type="PROSITE" id="PS50109">
    <property type="entry name" value="HIS_KIN"/>
    <property type="match status" value="1"/>
</dbReference>
<dbReference type="PROSITE" id="PS50112">
    <property type="entry name" value="PAS"/>
    <property type="match status" value="1"/>
</dbReference>
<gene>
    <name type="primary">dcuS</name>
    <name type="ordered locus">c5131</name>
</gene>
<reference key="1">
    <citation type="journal article" date="2002" name="Proc. Natl. Acad. Sci. U.S.A.">
        <title>Extensive mosaic structure revealed by the complete genome sequence of uropathogenic Escherichia coli.</title>
        <authorList>
            <person name="Welch R.A."/>
            <person name="Burland V."/>
            <person name="Plunkett G. III"/>
            <person name="Redford P."/>
            <person name="Roesch P."/>
            <person name="Rasko D."/>
            <person name="Buckles E.L."/>
            <person name="Liou S.-R."/>
            <person name="Boutin A."/>
            <person name="Hackett J."/>
            <person name="Stroud D."/>
            <person name="Mayhew G.F."/>
            <person name="Rose D.J."/>
            <person name="Zhou S."/>
            <person name="Schwartz D.C."/>
            <person name="Perna N.T."/>
            <person name="Mobley H.L.T."/>
            <person name="Donnenberg M.S."/>
            <person name="Blattner F.R."/>
        </authorList>
    </citation>
    <scope>NUCLEOTIDE SEQUENCE [LARGE SCALE GENOMIC DNA]</scope>
    <source>
        <strain>CFT073 / ATCC 700928 / UPEC</strain>
    </source>
</reference>
<sequence length="543" mass="60546">MRHSLPYRMLRKRPMKLSTTVILMVSAVLFSVLLVVHLIYFSQISDMTRDGLANKALAVARTLADSPEIRQGLQKKPQESGIQAIAEAVRKRNDLLFIVVTDMHSLRYSHPEAQRIGQPFKGDDILKALNGEENVAINRGFLAQALRVFTPIYDENHKQIGVVAIGLELSRVTQQINDSRWSIIWSVLFGMLVGLIGTCILVNVLKKILFGLEPYEISTLFEQRQAMLQSIKEGVVAVDDRGEVTLINDAAQELLNYRKSQDDEKLSTLSHSWSQVVDVSEVLRDGTPRRDEEITIKDRLLLINTVPVRSNGVIIGAISTFRDKTEVRKLMQRLDGLVNYADALRERSHEFMNKLHVILGLLHLKSYKQLEDYILKTANNYQEEIGSLLGKIKSPVIAGFLISKINRATDLGHTLILNSESQLPDSGSEDQVATLITTLGNLIENALEALGPEPGGEISVTLHYRHGWLHCEVNDDGPGIAPDKIDHIFDKGVSTKGSERGVGLALVKQQVENLGGSIAVESEPGIFTQFFVQIPWDGERSNR</sequence>
<comment type="function">
    <text evidence="1">Member of the two-component regulatory system DcuR/DcuS. Involved in the C4-dicarboxylate-stimulated regulation of the genes encoding the anaerobic fumarate respiratory system (frdABCD; nuoAN; dcuB; sdhCDAB; etc.). Weakly regulates the aerobic C4-dicarboxylate transporter dctA. Activates DcuR by phosphorylation.</text>
</comment>
<comment type="catalytic activity">
    <reaction evidence="1">
        <text>ATP + protein L-histidine = ADP + protein N-phospho-L-histidine.</text>
        <dbReference type="EC" id="2.7.13.3"/>
    </reaction>
</comment>
<comment type="subunit">
    <text evidence="1">Homodimer.</text>
</comment>
<comment type="subcellular location">
    <subcellularLocation>
        <location evidence="1">Cell inner membrane</location>
        <topology evidence="2">Multi-pass membrane protein</topology>
    </subcellularLocation>
</comment>
<comment type="domain">
    <text evidence="1">The periplasmic domain is involved in C4-dicarboxylate binding and sensing. The structural disorder in the cytoplasmic PAS domain has an important role in signal transduction to the kinase domain and may be the decisive structural feature that characterizes the activated kinase.</text>
</comment>
<comment type="PTM">
    <text evidence="1">Autophosphorylated. The phosphoryl group is rapidly transferred to DcuR.</text>
</comment>
<proteinExistence type="inferred from homology"/>
<organism>
    <name type="scientific">Escherichia coli O6:H1 (strain CFT073 / ATCC 700928 / UPEC)</name>
    <dbReference type="NCBI Taxonomy" id="199310"/>
    <lineage>
        <taxon>Bacteria</taxon>
        <taxon>Pseudomonadati</taxon>
        <taxon>Pseudomonadota</taxon>
        <taxon>Gammaproteobacteria</taxon>
        <taxon>Enterobacterales</taxon>
        <taxon>Enterobacteriaceae</taxon>
        <taxon>Escherichia</taxon>
    </lineage>
</organism>